<proteinExistence type="inferred from homology"/>
<dbReference type="EMBL" id="CP000936">
    <property type="protein sequence ID" value="ACA37480.1"/>
    <property type="molecule type" value="Genomic_DNA"/>
</dbReference>
<dbReference type="RefSeq" id="WP_000301210.1">
    <property type="nucleotide sequence ID" value="NC_010380.1"/>
</dbReference>
<dbReference type="SMR" id="B1ICT0"/>
<dbReference type="KEGG" id="spv:SPH_1620"/>
<dbReference type="HOGENOM" id="CLU_050669_0_1_9"/>
<dbReference type="Proteomes" id="UP000002163">
    <property type="component" value="Chromosome"/>
</dbReference>
<dbReference type="GO" id="GO:0005886">
    <property type="term" value="C:plasma membrane"/>
    <property type="evidence" value="ECO:0007669"/>
    <property type="project" value="UniProtKB-SubCell"/>
</dbReference>
<dbReference type="GO" id="GO:0045259">
    <property type="term" value="C:proton-transporting ATP synthase complex"/>
    <property type="evidence" value="ECO:0007669"/>
    <property type="project" value="UniProtKB-KW"/>
</dbReference>
<dbReference type="GO" id="GO:0005524">
    <property type="term" value="F:ATP binding"/>
    <property type="evidence" value="ECO:0007669"/>
    <property type="project" value="UniProtKB-UniRule"/>
</dbReference>
<dbReference type="GO" id="GO:0046933">
    <property type="term" value="F:proton-transporting ATP synthase activity, rotational mechanism"/>
    <property type="evidence" value="ECO:0007669"/>
    <property type="project" value="UniProtKB-UniRule"/>
</dbReference>
<dbReference type="GO" id="GO:0042777">
    <property type="term" value="P:proton motive force-driven plasma membrane ATP synthesis"/>
    <property type="evidence" value="ECO:0007669"/>
    <property type="project" value="UniProtKB-UniRule"/>
</dbReference>
<dbReference type="CDD" id="cd12151">
    <property type="entry name" value="F1-ATPase_gamma"/>
    <property type="match status" value="1"/>
</dbReference>
<dbReference type="FunFam" id="3.40.1380.10:FF:000002">
    <property type="entry name" value="ATP synthase gamma chain"/>
    <property type="match status" value="1"/>
</dbReference>
<dbReference type="Gene3D" id="3.40.1380.10">
    <property type="match status" value="1"/>
</dbReference>
<dbReference type="Gene3D" id="1.10.287.80">
    <property type="entry name" value="ATP synthase, gamma subunit, helix hairpin domain"/>
    <property type="match status" value="1"/>
</dbReference>
<dbReference type="HAMAP" id="MF_00815">
    <property type="entry name" value="ATP_synth_gamma_bact"/>
    <property type="match status" value="1"/>
</dbReference>
<dbReference type="InterPro" id="IPR035968">
    <property type="entry name" value="ATP_synth_F1_ATPase_gsu"/>
</dbReference>
<dbReference type="InterPro" id="IPR000131">
    <property type="entry name" value="ATP_synth_F1_gsu"/>
</dbReference>
<dbReference type="InterPro" id="IPR023632">
    <property type="entry name" value="ATP_synth_F1_gsu_CS"/>
</dbReference>
<dbReference type="NCBIfam" id="TIGR01146">
    <property type="entry name" value="ATPsyn_F1gamma"/>
    <property type="match status" value="1"/>
</dbReference>
<dbReference type="NCBIfam" id="NF004147">
    <property type="entry name" value="PRK05621.2-1"/>
    <property type="match status" value="1"/>
</dbReference>
<dbReference type="PANTHER" id="PTHR11693">
    <property type="entry name" value="ATP SYNTHASE GAMMA CHAIN"/>
    <property type="match status" value="1"/>
</dbReference>
<dbReference type="PANTHER" id="PTHR11693:SF22">
    <property type="entry name" value="ATP SYNTHASE SUBUNIT GAMMA, MITOCHONDRIAL"/>
    <property type="match status" value="1"/>
</dbReference>
<dbReference type="Pfam" id="PF00231">
    <property type="entry name" value="ATP-synt"/>
    <property type="match status" value="1"/>
</dbReference>
<dbReference type="PRINTS" id="PR00126">
    <property type="entry name" value="ATPASEGAMMA"/>
</dbReference>
<dbReference type="SUPFAM" id="SSF52943">
    <property type="entry name" value="ATP synthase (F1-ATPase), gamma subunit"/>
    <property type="match status" value="1"/>
</dbReference>
<dbReference type="PROSITE" id="PS00153">
    <property type="entry name" value="ATPASE_GAMMA"/>
    <property type="match status" value="1"/>
</dbReference>
<protein>
    <recommendedName>
        <fullName evidence="1">ATP synthase gamma chain</fullName>
    </recommendedName>
    <alternativeName>
        <fullName evidence="1">ATP synthase F1 sector gamma subunit</fullName>
    </alternativeName>
    <alternativeName>
        <fullName evidence="1">F-ATPase gamma subunit</fullName>
    </alternativeName>
</protein>
<sequence length="292" mass="32309">MAVSLNDIKTKIASTKNTSQITNAMQMVSAAKLGRSEEAARNFQVYAQKVRKLLTDILHGNGAGASTNPMLISRSVKKTGYIVITSDRGLVGGYNSSILKAVMELKEEYHPDGKGFEMICIGGMGADFFKARGIQPLYELRGLADQPSFDQVRKIISKTVEMYQNELFDELYVCYNHHVNTLTSQMRVEQMLPIVDLDPNEADEEYSLTFELETSREEILEQLLPQFAESMIYGAIIDAKTAENAAGMTAMQTATDNAKKVINDLTIQYNRARQAAITQEITEIVAGASALE</sequence>
<organism>
    <name type="scientific">Streptococcus pneumoniae (strain Hungary19A-6)</name>
    <dbReference type="NCBI Taxonomy" id="487214"/>
    <lineage>
        <taxon>Bacteria</taxon>
        <taxon>Bacillati</taxon>
        <taxon>Bacillota</taxon>
        <taxon>Bacilli</taxon>
        <taxon>Lactobacillales</taxon>
        <taxon>Streptococcaceae</taxon>
        <taxon>Streptococcus</taxon>
    </lineage>
</organism>
<feature type="chain" id="PRO_1000134213" description="ATP synthase gamma chain">
    <location>
        <begin position="1"/>
        <end position="292"/>
    </location>
</feature>
<accession>B1ICT0</accession>
<name>ATPG_STRPI</name>
<reference key="1">
    <citation type="journal article" date="2010" name="Genome Biol.">
        <title>Structure and dynamics of the pan-genome of Streptococcus pneumoniae and closely related species.</title>
        <authorList>
            <person name="Donati C."/>
            <person name="Hiller N.L."/>
            <person name="Tettelin H."/>
            <person name="Muzzi A."/>
            <person name="Croucher N.J."/>
            <person name="Angiuoli S.V."/>
            <person name="Oggioni M."/>
            <person name="Dunning Hotopp J.C."/>
            <person name="Hu F.Z."/>
            <person name="Riley D.R."/>
            <person name="Covacci A."/>
            <person name="Mitchell T.J."/>
            <person name="Bentley S.D."/>
            <person name="Kilian M."/>
            <person name="Ehrlich G.D."/>
            <person name="Rappuoli R."/>
            <person name="Moxon E.R."/>
            <person name="Masignani V."/>
        </authorList>
    </citation>
    <scope>NUCLEOTIDE SEQUENCE [LARGE SCALE GENOMIC DNA]</scope>
    <source>
        <strain>Hungary19A-6</strain>
    </source>
</reference>
<comment type="function">
    <text evidence="1">Produces ATP from ADP in the presence of a proton gradient across the membrane. The gamma chain is believed to be important in regulating ATPase activity and the flow of protons through the CF(0) complex.</text>
</comment>
<comment type="subunit">
    <text evidence="1">F-type ATPases have 2 components, CF(1) - the catalytic core - and CF(0) - the membrane proton channel. CF(1) has five subunits: alpha(3), beta(3), gamma(1), delta(1), epsilon(1). CF(0) has three main subunits: a, b and c.</text>
</comment>
<comment type="subcellular location">
    <subcellularLocation>
        <location evidence="1">Cell membrane</location>
        <topology evidence="1">Peripheral membrane protein</topology>
    </subcellularLocation>
</comment>
<comment type="similarity">
    <text evidence="1">Belongs to the ATPase gamma chain family.</text>
</comment>
<evidence type="ECO:0000255" key="1">
    <source>
        <dbReference type="HAMAP-Rule" id="MF_00815"/>
    </source>
</evidence>
<gene>
    <name evidence="1" type="primary">atpG</name>
    <name type="ordered locus">SPH_1620</name>
</gene>
<keyword id="KW-0066">ATP synthesis</keyword>
<keyword id="KW-1003">Cell membrane</keyword>
<keyword id="KW-0139">CF(1)</keyword>
<keyword id="KW-0375">Hydrogen ion transport</keyword>
<keyword id="KW-0406">Ion transport</keyword>
<keyword id="KW-0472">Membrane</keyword>
<keyword id="KW-0813">Transport</keyword>